<accession>P98073</accession>
<accession>Q2NKL7</accession>
<sequence length="1019" mass="112935">MGSKRGISSRHHSLSSYEIMFAALFAILVVLCAGLIAVSCLTIKESQRGAALGQSHEARATFKITSGVTYNPNLQDKLSVDFKVLAFDLQQMIDEIFLSSNLKNEYKNSRVLQFENGSIIVVFDLFFAQWVSDENVKEELIQGLEANKSSQLVTFHIDLNSVDILDKLTTTSHLATPGNVSIECLPGSSPCTDALTCIKADLFCDGEVNCPDGSDEDNKMCATVCDGRFLLTGSSGSFQATHYPKPSETSVVCQWIIRVNQGLSIKLSFDDFNTYYTDILDIYEGVGSSKILRASIWETNPGTIRIFSNQVTATFLIESDESDYVGFNATYTAFNSSELNNYEKINCNFEDGFCFWVQDLNDDNEWERIQGSTFSPFTGPNFDHTFGNASGFYISTPTGPGGRQERVGLLSLPLDPTLEPACLSFWYHMYGENVHKLSINISNDQNMEKTVFQKEGNYGDNWNYGQVTLNETVKFKVAFNAFKNKILSDIALDDISLTYGICNGSLYPEPTLVPTPPPELPTDCGGPFELWEPNTTFSSTNFPNSYPNLAFCVWILNAQKGKNIQLHFQEFDLENINDVVEIRDGEEADSLLLAVYTGPGPVKDVFSTTNRMTVLLITNDVLARGGFKANFTTGYHLGIPEPCKADHFQCKNGECVPLVNLCDGHLHCEDGSDEADCVRFFNGTTNNNGLVRFRIQSIWHTACAENWTTQISNDVCQLLGLGSGNSSKPIFPTDGGPFVKLNTAPDGHLILTPSQQCLQDSLIRLQCNHKSCGKKLAAQDITPKIVGGSNAKEGAWPWVVGLYYGGRLLCGASLVSSDWLVSAAHCVYGRNLEPSKWTAILGLHMKSNLTSPQTVPRLIDEIVINPHYNRRRKDNDIAMMHLEFKVNYTDYIQPICLPEENQVFPPGRNCSIAGWGTVVYQGTTANILQEADVPLLSNERCQQQMPEYNITENMICAGYEEGGIDSCQGDSGGPLMCQENNRWFLAGVTSFGYKCALPNRPGVYARVSRFTEWIQSFLH</sequence>
<gene>
    <name type="primary">TMPRSS15</name>
    <name type="synonym">ENTK</name>
    <name type="synonym">PRSS7</name>
</gene>
<evidence type="ECO:0000250" key="1"/>
<evidence type="ECO:0000255" key="2"/>
<evidence type="ECO:0000255" key="3">
    <source>
        <dbReference type="PROSITE-ProRule" id="PRU00059"/>
    </source>
</evidence>
<evidence type="ECO:0000255" key="4">
    <source>
        <dbReference type="PROSITE-ProRule" id="PRU00124"/>
    </source>
</evidence>
<evidence type="ECO:0000255" key="5">
    <source>
        <dbReference type="PROSITE-ProRule" id="PRU00128"/>
    </source>
</evidence>
<evidence type="ECO:0000255" key="6">
    <source>
        <dbReference type="PROSITE-ProRule" id="PRU00188"/>
    </source>
</evidence>
<evidence type="ECO:0000255" key="7">
    <source>
        <dbReference type="PROSITE-ProRule" id="PRU00196"/>
    </source>
</evidence>
<evidence type="ECO:0000255" key="8">
    <source>
        <dbReference type="PROSITE-ProRule" id="PRU00274"/>
    </source>
</evidence>
<evidence type="ECO:0000269" key="9">
    <source>
    </source>
</evidence>
<evidence type="ECO:0000269" key="10">
    <source>
    </source>
</evidence>
<evidence type="ECO:0000269" key="11">
    <source>
    </source>
</evidence>
<evidence type="ECO:0000269" key="12">
    <source>
    </source>
</evidence>
<evidence type="ECO:0000305" key="13"/>
<evidence type="ECO:0007829" key="14">
    <source>
        <dbReference type="PDB" id="4DGJ"/>
    </source>
</evidence>
<evidence type="ECO:0007829" key="15">
    <source>
        <dbReference type="PDB" id="7WQX"/>
    </source>
</evidence>
<comment type="function">
    <text>Responsible for initiating activation of pancreatic proteolytic proenzymes (trypsin, chymotrypsin and carboxypeptidase A). It catalyzes the conversion of trypsinogen to trypsin which in turn activates other proenzymes including chymotrypsinogen, procarboxypeptidases, and proelastases.</text>
</comment>
<comment type="catalytic activity">
    <reaction>
        <text>Activation of trypsinogen by selective cleavage of 6-Lys-|-Ile-7 bond.</text>
        <dbReference type="EC" id="3.4.21.9"/>
    </reaction>
</comment>
<comment type="subunit">
    <text>Heterodimer of a catalytic (light) chain and a multidomain (heavy) chain linked by a disulfide bond.</text>
</comment>
<comment type="subcellular location">
    <subcellularLocation>
        <location evidence="13">Membrane</location>
        <topology evidence="13">Single-pass type II membrane protein</topology>
    </subcellularLocation>
</comment>
<comment type="tissue specificity">
    <text>Intestinal brush border.</text>
</comment>
<comment type="PTM">
    <text>The chains are derived from a single precursor that is cleaved by a trypsin-like protease.</text>
</comment>
<comment type="disease" evidence="9">
    <disease id="DI-01528">
        <name>Enterokinase deficiency</name>
        <acronym>ENTKD</acronym>
        <description>Life-threatening intestinal malabsorption disorder characterized by diarrhea and failure to thrive.</description>
        <dbReference type="MIM" id="226200"/>
    </disease>
    <text>The disease is caused by variants affecting the gene represented in this entry.</text>
</comment>
<comment type="similarity">
    <text evidence="8">Belongs to the peptidase S1 family.</text>
</comment>
<comment type="sequence caution" evidence="13">
    <conflict type="erroneous gene model prediction">
        <sequence resource="EMBL-CDS" id="CAB90389"/>
    </conflict>
</comment>
<organism>
    <name type="scientific">Homo sapiens</name>
    <name type="common">Human</name>
    <dbReference type="NCBI Taxonomy" id="9606"/>
    <lineage>
        <taxon>Eukaryota</taxon>
        <taxon>Metazoa</taxon>
        <taxon>Chordata</taxon>
        <taxon>Craniata</taxon>
        <taxon>Vertebrata</taxon>
        <taxon>Euteleostomi</taxon>
        <taxon>Mammalia</taxon>
        <taxon>Eutheria</taxon>
        <taxon>Euarchontoglires</taxon>
        <taxon>Primates</taxon>
        <taxon>Haplorrhini</taxon>
        <taxon>Catarrhini</taxon>
        <taxon>Hominidae</taxon>
        <taxon>Homo</taxon>
    </lineage>
</organism>
<keyword id="KW-0002">3D-structure</keyword>
<keyword id="KW-1015">Disulfide bond</keyword>
<keyword id="KW-0325">Glycoprotein</keyword>
<keyword id="KW-0378">Hydrolase</keyword>
<keyword id="KW-0449">Lipoprotein</keyword>
<keyword id="KW-0472">Membrane</keyword>
<keyword id="KW-0519">Myristate</keyword>
<keyword id="KW-0645">Protease</keyword>
<keyword id="KW-1267">Proteomics identification</keyword>
<keyword id="KW-1185">Reference proteome</keyword>
<keyword id="KW-0677">Repeat</keyword>
<keyword id="KW-0720">Serine protease</keyword>
<keyword id="KW-0735">Signal-anchor</keyword>
<keyword id="KW-0812">Transmembrane</keyword>
<keyword id="KW-1133">Transmembrane helix</keyword>
<keyword id="KW-0865">Zymogen</keyword>
<dbReference type="EC" id="3.4.21.9"/>
<dbReference type="EMBL" id="U09860">
    <property type="protein sequence ID" value="AAC50138.1"/>
    <property type="molecule type" value="mRNA"/>
</dbReference>
<dbReference type="EMBL" id="Y19124">
    <property type="protein sequence ID" value="CAB65555.1"/>
    <property type="molecule type" value="Genomic_DNA"/>
</dbReference>
<dbReference type="EMBL" id="Y19125">
    <property type="protein sequence ID" value="CAB65555.1"/>
    <property type="status" value="JOINED"/>
    <property type="molecule type" value="Genomic_DNA"/>
</dbReference>
<dbReference type="EMBL" id="Y19126">
    <property type="protein sequence ID" value="CAB65555.1"/>
    <property type="status" value="JOINED"/>
    <property type="molecule type" value="Genomic_DNA"/>
</dbReference>
<dbReference type="EMBL" id="Y19127">
    <property type="protein sequence ID" value="CAB65555.1"/>
    <property type="status" value="JOINED"/>
    <property type="molecule type" value="Genomic_DNA"/>
</dbReference>
<dbReference type="EMBL" id="Y19128">
    <property type="protein sequence ID" value="CAB65555.1"/>
    <property type="status" value="JOINED"/>
    <property type="molecule type" value="Genomic_DNA"/>
</dbReference>
<dbReference type="EMBL" id="Y19129">
    <property type="protein sequence ID" value="CAB65555.1"/>
    <property type="status" value="JOINED"/>
    <property type="molecule type" value="Genomic_DNA"/>
</dbReference>
<dbReference type="EMBL" id="Y19130">
    <property type="protein sequence ID" value="CAB65555.1"/>
    <property type="status" value="JOINED"/>
    <property type="molecule type" value="Genomic_DNA"/>
</dbReference>
<dbReference type="EMBL" id="Y19131">
    <property type="protein sequence ID" value="CAB65555.1"/>
    <property type="status" value="JOINED"/>
    <property type="molecule type" value="Genomic_DNA"/>
</dbReference>
<dbReference type="EMBL" id="Y19132">
    <property type="protein sequence ID" value="CAB65555.1"/>
    <property type="status" value="JOINED"/>
    <property type="molecule type" value="Genomic_DNA"/>
</dbReference>
<dbReference type="EMBL" id="Y19133">
    <property type="protein sequence ID" value="CAB65555.1"/>
    <property type="status" value="JOINED"/>
    <property type="molecule type" value="Genomic_DNA"/>
</dbReference>
<dbReference type="EMBL" id="Y19134">
    <property type="protein sequence ID" value="CAB65555.1"/>
    <property type="status" value="JOINED"/>
    <property type="molecule type" value="Genomic_DNA"/>
</dbReference>
<dbReference type="EMBL" id="Y19135">
    <property type="protein sequence ID" value="CAB65555.1"/>
    <property type="status" value="JOINED"/>
    <property type="molecule type" value="Genomic_DNA"/>
</dbReference>
<dbReference type="EMBL" id="Y19136">
    <property type="protein sequence ID" value="CAB65555.1"/>
    <property type="status" value="JOINED"/>
    <property type="molecule type" value="Genomic_DNA"/>
</dbReference>
<dbReference type="EMBL" id="Y19137">
    <property type="protein sequence ID" value="CAB65555.1"/>
    <property type="status" value="JOINED"/>
    <property type="molecule type" value="Genomic_DNA"/>
</dbReference>
<dbReference type="EMBL" id="Y19138">
    <property type="protein sequence ID" value="CAB65555.1"/>
    <property type="status" value="JOINED"/>
    <property type="molecule type" value="Genomic_DNA"/>
</dbReference>
<dbReference type="EMBL" id="Y19139">
    <property type="protein sequence ID" value="CAB65555.1"/>
    <property type="status" value="JOINED"/>
    <property type="molecule type" value="Genomic_DNA"/>
</dbReference>
<dbReference type="EMBL" id="Y19140">
    <property type="protein sequence ID" value="CAB65555.1"/>
    <property type="status" value="JOINED"/>
    <property type="molecule type" value="Genomic_DNA"/>
</dbReference>
<dbReference type="EMBL" id="Y19141">
    <property type="protein sequence ID" value="CAB65555.1"/>
    <property type="status" value="JOINED"/>
    <property type="molecule type" value="Genomic_DNA"/>
</dbReference>
<dbReference type="EMBL" id="Y19142">
    <property type="protein sequence ID" value="CAB65555.1"/>
    <property type="status" value="JOINED"/>
    <property type="molecule type" value="Genomic_DNA"/>
</dbReference>
<dbReference type="EMBL" id="Y19143">
    <property type="protein sequence ID" value="CAB65555.1"/>
    <property type="status" value="JOINED"/>
    <property type="molecule type" value="Genomic_DNA"/>
</dbReference>
<dbReference type="EMBL" id="AL163217">
    <property type="protein sequence ID" value="CAB90389.1"/>
    <property type="status" value="ALT_SEQ"/>
    <property type="molecule type" value="Genomic_DNA"/>
</dbReference>
<dbReference type="EMBL" id="AL163218">
    <property type="protein sequence ID" value="CAB90392.1"/>
    <property type="molecule type" value="Genomic_DNA"/>
</dbReference>
<dbReference type="EMBL" id="BC111749">
    <property type="protein sequence ID" value="AAI11750.1"/>
    <property type="molecule type" value="mRNA"/>
</dbReference>
<dbReference type="CCDS" id="CCDS13571.1"/>
<dbReference type="PIR" id="A56318">
    <property type="entry name" value="A56318"/>
</dbReference>
<dbReference type="RefSeq" id="NP_001414986.1">
    <property type="nucleotide sequence ID" value="NM_001428057.1"/>
</dbReference>
<dbReference type="RefSeq" id="NP_002763.3">
    <property type="nucleotide sequence ID" value="NM_002772.3"/>
</dbReference>
<dbReference type="RefSeq" id="XP_047296869.1">
    <property type="nucleotide sequence ID" value="XM_047440913.1"/>
</dbReference>
<dbReference type="PDB" id="4DGJ">
    <property type="method" value="X-ray"/>
    <property type="resolution" value="1.90 A"/>
    <property type="chains" value="A/B/C/D=785-1019"/>
</dbReference>
<dbReference type="PDB" id="6ZOV">
    <property type="method" value="X-ray"/>
    <property type="resolution" value="2.19 A"/>
    <property type="chains" value="A/B/C/D=785-1019"/>
</dbReference>
<dbReference type="PDB" id="7WQX">
    <property type="method" value="EM"/>
    <property type="resolution" value="2.70 A"/>
    <property type="chains" value="A=519-1019"/>
</dbReference>
<dbReference type="PDBsum" id="4DGJ"/>
<dbReference type="PDBsum" id="6ZOV"/>
<dbReference type="PDBsum" id="7WQX"/>
<dbReference type="EMDB" id="EMD-32714"/>
<dbReference type="EMDB" id="EMD-32715"/>
<dbReference type="EMDB" id="EMD-32716"/>
<dbReference type="EMDB" id="EMD-32717"/>
<dbReference type="SMR" id="P98073"/>
<dbReference type="BioGRID" id="111632">
    <property type="interactions" value="2"/>
</dbReference>
<dbReference type="FunCoup" id="P98073">
    <property type="interactions" value="22"/>
</dbReference>
<dbReference type="IntAct" id="P98073">
    <property type="interactions" value="3"/>
</dbReference>
<dbReference type="MINT" id="P98073"/>
<dbReference type="STRING" id="9606.ENSP00000284885"/>
<dbReference type="BindingDB" id="P98073"/>
<dbReference type="ChEMBL" id="CHEMBL1741195"/>
<dbReference type="GuidetoPHARMACOLOGY" id="3189"/>
<dbReference type="MEROPS" id="S01.156"/>
<dbReference type="GlyCosmos" id="P98073">
    <property type="glycosylation" value="18 sites, No reported glycans"/>
</dbReference>
<dbReference type="GlyGen" id="P98073">
    <property type="glycosylation" value="20 sites, 1 N-linked glycan (1 site)"/>
</dbReference>
<dbReference type="iPTMnet" id="P98073"/>
<dbReference type="PhosphoSitePlus" id="P98073"/>
<dbReference type="BioMuta" id="TMPRSS15"/>
<dbReference type="DMDM" id="317373442"/>
<dbReference type="MassIVE" id="P98073"/>
<dbReference type="PaxDb" id="9606-ENSP00000284885"/>
<dbReference type="PeptideAtlas" id="P98073"/>
<dbReference type="ProteomicsDB" id="57784"/>
<dbReference type="Pumba" id="P98073"/>
<dbReference type="Antibodypedia" id="2519">
    <property type="antibodies" value="235 antibodies from 29 providers"/>
</dbReference>
<dbReference type="DNASU" id="5651"/>
<dbReference type="Ensembl" id="ENST00000284885.8">
    <property type="protein sequence ID" value="ENSP00000284885.3"/>
    <property type="gene ID" value="ENSG00000154646.9"/>
</dbReference>
<dbReference type="GeneID" id="5651"/>
<dbReference type="KEGG" id="hsa:5651"/>
<dbReference type="MANE-Select" id="ENST00000284885.8">
    <property type="protein sequence ID" value="ENSP00000284885.3"/>
    <property type="RefSeq nucleotide sequence ID" value="NM_002772.3"/>
    <property type="RefSeq protein sequence ID" value="NP_002763.3"/>
</dbReference>
<dbReference type="UCSC" id="uc002ykw.4">
    <property type="organism name" value="human"/>
</dbReference>
<dbReference type="AGR" id="HGNC:9490"/>
<dbReference type="CTD" id="5651"/>
<dbReference type="DisGeNET" id="5651"/>
<dbReference type="GeneCards" id="TMPRSS15"/>
<dbReference type="HGNC" id="HGNC:9490">
    <property type="gene designation" value="TMPRSS15"/>
</dbReference>
<dbReference type="HPA" id="ENSG00000154646">
    <property type="expression patterns" value="Tissue enriched (intestine)"/>
</dbReference>
<dbReference type="MalaCards" id="TMPRSS15"/>
<dbReference type="MIM" id="226200">
    <property type="type" value="phenotype"/>
</dbReference>
<dbReference type="MIM" id="606635">
    <property type="type" value="gene"/>
</dbReference>
<dbReference type="neXtProt" id="NX_P98073"/>
<dbReference type="OpenTargets" id="ENSG00000154646"/>
<dbReference type="Orphanet" id="168601">
    <property type="disease" value="Congenital enteropathy due to enteropeptidase deficiency"/>
</dbReference>
<dbReference type="PharmGKB" id="PA33839"/>
<dbReference type="VEuPathDB" id="HostDB:ENSG00000154646"/>
<dbReference type="eggNOG" id="KOG3627">
    <property type="taxonomic scope" value="Eukaryota"/>
</dbReference>
<dbReference type="GeneTree" id="ENSGT00940000159353"/>
<dbReference type="HOGENOM" id="CLU_011803_0_0_1"/>
<dbReference type="InParanoid" id="P98073"/>
<dbReference type="OMA" id="THGICNG"/>
<dbReference type="OrthoDB" id="425190at2759"/>
<dbReference type="PAN-GO" id="P98073">
    <property type="GO annotations" value="1 GO annotation based on evolutionary models"/>
</dbReference>
<dbReference type="PhylomeDB" id="P98073"/>
<dbReference type="TreeFam" id="TF351678"/>
<dbReference type="BRENDA" id="3.4.21.9">
    <property type="organism ID" value="2681"/>
</dbReference>
<dbReference type="PathwayCommons" id="P98073"/>
<dbReference type="SignaLink" id="P98073"/>
<dbReference type="BioGRID-ORCS" id="5651">
    <property type="hits" value="10 hits in 1144 CRISPR screens"/>
</dbReference>
<dbReference type="ChiTaRS" id="TMPRSS15">
    <property type="organism name" value="human"/>
</dbReference>
<dbReference type="EvolutionaryTrace" id="P98073"/>
<dbReference type="GenomeRNAi" id="5651"/>
<dbReference type="Pharos" id="P98073">
    <property type="development level" value="Tchem"/>
</dbReference>
<dbReference type="PRO" id="PR:P98073"/>
<dbReference type="Proteomes" id="UP000005640">
    <property type="component" value="Chromosome 21"/>
</dbReference>
<dbReference type="RNAct" id="P98073">
    <property type="molecule type" value="protein"/>
</dbReference>
<dbReference type="Bgee" id="ENSG00000154646">
    <property type="expression patterns" value="Expressed in jejunal mucosa and 40 other cell types or tissues"/>
</dbReference>
<dbReference type="ExpressionAtlas" id="P98073">
    <property type="expression patterns" value="baseline and differential"/>
</dbReference>
<dbReference type="GO" id="GO:0005903">
    <property type="term" value="C:brush border"/>
    <property type="evidence" value="ECO:0000304"/>
    <property type="project" value="ProtInc"/>
</dbReference>
<dbReference type="GO" id="GO:0016020">
    <property type="term" value="C:membrane"/>
    <property type="evidence" value="ECO:0000318"/>
    <property type="project" value="GO_Central"/>
</dbReference>
<dbReference type="GO" id="GO:0004252">
    <property type="term" value="F:serine-type endopeptidase activity"/>
    <property type="evidence" value="ECO:0007669"/>
    <property type="project" value="UniProtKB-EC"/>
</dbReference>
<dbReference type="GO" id="GO:0006508">
    <property type="term" value="P:proteolysis"/>
    <property type="evidence" value="ECO:0007669"/>
    <property type="project" value="UniProtKB-KW"/>
</dbReference>
<dbReference type="CDD" id="cd00041">
    <property type="entry name" value="CUB"/>
    <property type="match status" value="2"/>
</dbReference>
<dbReference type="CDD" id="cd00112">
    <property type="entry name" value="LDLa"/>
    <property type="match status" value="2"/>
</dbReference>
<dbReference type="CDD" id="cd06263">
    <property type="entry name" value="MAM"/>
    <property type="match status" value="1"/>
</dbReference>
<dbReference type="CDD" id="cd00190">
    <property type="entry name" value="Tryp_SPc"/>
    <property type="match status" value="1"/>
</dbReference>
<dbReference type="FunFam" id="2.60.120.290:FF:000043">
    <property type="entry name" value="Enteropeptidase"/>
    <property type="match status" value="1"/>
</dbReference>
<dbReference type="FunFam" id="3.10.250.10:FF:000029">
    <property type="entry name" value="Enteropeptidase"/>
    <property type="match status" value="1"/>
</dbReference>
<dbReference type="FunFam" id="3.30.70.960:FF:000007">
    <property type="entry name" value="Enteropeptidase"/>
    <property type="match status" value="1"/>
</dbReference>
<dbReference type="FunFam" id="4.10.400.10:FF:000144">
    <property type="entry name" value="enteropeptidase"/>
    <property type="match status" value="1"/>
</dbReference>
<dbReference type="FunFam" id="2.60.120.200:FF:000128">
    <property type="entry name" value="enteropeptidase isoform X2"/>
    <property type="match status" value="1"/>
</dbReference>
<dbReference type="FunFam" id="2.60.120.290:FF:000038">
    <property type="entry name" value="enteropeptidase isoform X2"/>
    <property type="match status" value="1"/>
</dbReference>
<dbReference type="FunFam" id="4.10.400.10:FF:000149">
    <property type="entry name" value="enteropeptidase isoform X2"/>
    <property type="match status" value="1"/>
</dbReference>
<dbReference type="FunFam" id="2.40.10.10:FF:000003">
    <property type="entry name" value="Transmembrane serine protease 3"/>
    <property type="match status" value="1"/>
</dbReference>
<dbReference type="Gene3D" id="2.60.120.200">
    <property type="match status" value="1"/>
</dbReference>
<dbReference type="Gene3D" id="4.10.400.10">
    <property type="entry name" value="Low-density Lipoprotein Receptor"/>
    <property type="match status" value="2"/>
</dbReference>
<dbReference type="Gene3D" id="3.30.70.960">
    <property type="entry name" value="SEA domain"/>
    <property type="match status" value="1"/>
</dbReference>
<dbReference type="Gene3D" id="2.60.120.290">
    <property type="entry name" value="Spermadhesin, CUB domain"/>
    <property type="match status" value="2"/>
</dbReference>
<dbReference type="Gene3D" id="3.10.250.10">
    <property type="entry name" value="SRCR-like domain"/>
    <property type="match status" value="1"/>
</dbReference>
<dbReference type="Gene3D" id="2.40.10.10">
    <property type="entry name" value="Trypsin-like serine proteases"/>
    <property type="match status" value="2"/>
</dbReference>
<dbReference type="InterPro" id="IPR013320">
    <property type="entry name" value="ConA-like_dom_sf"/>
</dbReference>
<dbReference type="InterPro" id="IPR000859">
    <property type="entry name" value="CUB_dom"/>
</dbReference>
<dbReference type="InterPro" id="IPR036055">
    <property type="entry name" value="LDL_receptor-like_sf"/>
</dbReference>
<dbReference type="InterPro" id="IPR023415">
    <property type="entry name" value="LDLR_class-A_CS"/>
</dbReference>
<dbReference type="InterPro" id="IPR002172">
    <property type="entry name" value="LDrepeatLR_classA_rpt"/>
</dbReference>
<dbReference type="InterPro" id="IPR000998">
    <property type="entry name" value="MAM_dom"/>
</dbReference>
<dbReference type="InterPro" id="IPR011163">
    <property type="entry name" value="Pept_S1A_enterop"/>
</dbReference>
<dbReference type="InterPro" id="IPR009003">
    <property type="entry name" value="Peptidase_S1_PA"/>
</dbReference>
<dbReference type="InterPro" id="IPR043504">
    <property type="entry name" value="Peptidase_S1_PA_chymotrypsin"/>
</dbReference>
<dbReference type="InterPro" id="IPR001314">
    <property type="entry name" value="Peptidase_S1A"/>
</dbReference>
<dbReference type="InterPro" id="IPR000082">
    <property type="entry name" value="SEA_dom"/>
</dbReference>
<dbReference type="InterPro" id="IPR036364">
    <property type="entry name" value="SEA_dom_sf"/>
</dbReference>
<dbReference type="InterPro" id="IPR035914">
    <property type="entry name" value="Sperma_CUB_dom_sf"/>
</dbReference>
<dbReference type="InterPro" id="IPR001190">
    <property type="entry name" value="SRCR"/>
</dbReference>
<dbReference type="InterPro" id="IPR036772">
    <property type="entry name" value="SRCR-like_dom_sf"/>
</dbReference>
<dbReference type="InterPro" id="IPR001254">
    <property type="entry name" value="Trypsin_dom"/>
</dbReference>
<dbReference type="InterPro" id="IPR018114">
    <property type="entry name" value="TRYPSIN_HIS"/>
</dbReference>
<dbReference type="InterPro" id="IPR033116">
    <property type="entry name" value="TRYPSIN_SER"/>
</dbReference>
<dbReference type="PANTHER" id="PTHR24252">
    <property type="entry name" value="ACROSIN-RELATED"/>
    <property type="match status" value="1"/>
</dbReference>
<dbReference type="PANTHER" id="PTHR24252:SF16">
    <property type="entry name" value="TRANSMEMBRANE SERINE PROTEASE 15"/>
    <property type="match status" value="1"/>
</dbReference>
<dbReference type="Pfam" id="PF00431">
    <property type="entry name" value="CUB"/>
    <property type="match status" value="2"/>
</dbReference>
<dbReference type="Pfam" id="PF00057">
    <property type="entry name" value="Ldl_recept_a"/>
    <property type="match status" value="2"/>
</dbReference>
<dbReference type="Pfam" id="PF00629">
    <property type="entry name" value="MAM"/>
    <property type="match status" value="1"/>
</dbReference>
<dbReference type="Pfam" id="PF01390">
    <property type="entry name" value="SEA"/>
    <property type="match status" value="1"/>
</dbReference>
<dbReference type="Pfam" id="PF15494">
    <property type="entry name" value="SRCR_2"/>
    <property type="match status" value="1"/>
</dbReference>
<dbReference type="Pfam" id="PF00089">
    <property type="entry name" value="Trypsin"/>
    <property type="match status" value="1"/>
</dbReference>
<dbReference type="PIRSF" id="PIRSF001138">
    <property type="entry name" value="Enteropeptidase"/>
    <property type="match status" value="1"/>
</dbReference>
<dbReference type="PRINTS" id="PR00722">
    <property type="entry name" value="CHYMOTRYPSIN"/>
</dbReference>
<dbReference type="SMART" id="SM00042">
    <property type="entry name" value="CUB"/>
    <property type="match status" value="2"/>
</dbReference>
<dbReference type="SMART" id="SM00192">
    <property type="entry name" value="LDLa"/>
    <property type="match status" value="2"/>
</dbReference>
<dbReference type="SMART" id="SM00137">
    <property type="entry name" value="MAM"/>
    <property type="match status" value="1"/>
</dbReference>
<dbReference type="SMART" id="SM00200">
    <property type="entry name" value="SEA"/>
    <property type="match status" value="1"/>
</dbReference>
<dbReference type="SMART" id="SM00202">
    <property type="entry name" value="SR"/>
    <property type="match status" value="1"/>
</dbReference>
<dbReference type="SMART" id="SM00020">
    <property type="entry name" value="Tryp_SPc"/>
    <property type="match status" value="1"/>
</dbReference>
<dbReference type="SUPFAM" id="SSF49899">
    <property type="entry name" value="Concanavalin A-like lectins/glucanases"/>
    <property type="match status" value="1"/>
</dbReference>
<dbReference type="SUPFAM" id="SSF57424">
    <property type="entry name" value="LDL receptor-like module"/>
    <property type="match status" value="2"/>
</dbReference>
<dbReference type="SUPFAM" id="SSF82671">
    <property type="entry name" value="SEA domain"/>
    <property type="match status" value="1"/>
</dbReference>
<dbReference type="SUPFAM" id="SSF49854">
    <property type="entry name" value="Spermadhesin, CUB domain"/>
    <property type="match status" value="2"/>
</dbReference>
<dbReference type="SUPFAM" id="SSF56487">
    <property type="entry name" value="SRCR-like"/>
    <property type="match status" value="1"/>
</dbReference>
<dbReference type="SUPFAM" id="SSF50494">
    <property type="entry name" value="Trypsin-like serine proteases"/>
    <property type="match status" value="1"/>
</dbReference>
<dbReference type="PROSITE" id="PS01180">
    <property type="entry name" value="CUB"/>
    <property type="match status" value="2"/>
</dbReference>
<dbReference type="PROSITE" id="PS01209">
    <property type="entry name" value="LDLRA_1"/>
    <property type="match status" value="2"/>
</dbReference>
<dbReference type="PROSITE" id="PS50068">
    <property type="entry name" value="LDLRA_2"/>
    <property type="match status" value="2"/>
</dbReference>
<dbReference type="PROSITE" id="PS00740">
    <property type="entry name" value="MAM_1"/>
    <property type="match status" value="1"/>
</dbReference>
<dbReference type="PROSITE" id="PS50060">
    <property type="entry name" value="MAM_2"/>
    <property type="match status" value="1"/>
</dbReference>
<dbReference type="PROSITE" id="PS50024">
    <property type="entry name" value="SEA"/>
    <property type="match status" value="1"/>
</dbReference>
<dbReference type="PROSITE" id="PS50287">
    <property type="entry name" value="SRCR_2"/>
    <property type="match status" value="1"/>
</dbReference>
<dbReference type="PROSITE" id="PS50240">
    <property type="entry name" value="TRYPSIN_DOM"/>
    <property type="match status" value="1"/>
</dbReference>
<dbReference type="PROSITE" id="PS00134">
    <property type="entry name" value="TRYPSIN_HIS"/>
    <property type="match status" value="1"/>
</dbReference>
<dbReference type="PROSITE" id="PS00135">
    <property type="entry name" value="TRYPSIN_SER"/>
    <property type="match status" value="1"/>
</dbReference>
<feature type="initiator methionine" description="Removed" evidence="2">
    <location>
        <position position="1"/>
    </location>
</feature>
<feature type="chain" id="PRO_0000027719" description="Enteropeptidase non-catalytic heavy chain">
    <location>
        <begin position="2"/>
        <end position="784"/>
    </location>
</feature>
<feature type="chain" id="PRO_0000027720" description="Enteropeptidase catalytic light chain">
    <location>
        <begin position="785"/>
        <end position="1019"/>
    </location>
</feature>
<feature type="topological domain" description="Cytoplasmic" evidence="2">
    <location>
        <begin position="2"/>
        <end position="18"/>
    </location>
</feature>
<feature type="transmembrane region" description="Helical; Signal-anchor for type II membrane protein" evidence="2">
    <location>
        <begin position="19"/>
        <end position="47"/>
    </location>
</feature>
<feature type="topological domain" description="Extracellular" evidence="2">
    <location>
        <begin position="48"/>
        <end position="1019"/>
    </location>
</feature>
<feature type="domain" description="SEA" evidence="6">
    <location>
        <begin position="54"/>
        <end position="169"/>
    </location>
</feature>
<feature type="domain" description="LDL-receptor class A 1" evidence="4">
    <location>
        <begin position="182"/>
        <end position="223"/>
    </location>
</feature>
<feature type="domain" description="CUB 1" evidence="3">
    <location>
        <begin position="225"/>
        <end position="334"/>
    </location>
</feature>
<feature type="domain" description="MAM" evidence="5">
    <location>
        <begin position="342"/>
        <end position="504"/>
    </location>
</feature>
<feature type="domain" description="CUB 2" evidence="3">
    <location>
        <begin position="524"/>
        <end position="634"/>
    </location>
</feature>
<feature type="domain" description="LDL-receptor class A 2" evidence="4">
    <location>
        <begin position="641"/>
        <end position="679"/>
    </location>
</feature>
<feature type="domain" description="SRCR" evidence="7">
    <location>
        <begin position="678"/>
        <end position="771"/>
    </location>
</feature>
<feature type="domain" description="Peptidase S1" evidence="8">
    <location>
        <begin position="785"/>
        <end position="1019"/>
    </location>
</feature>
<feature type="active site" description="Charge relay system" evidence="1">
    <location>
        <position position="825"/>
    </location>
</feature>
<feature type="active site" description="Charge relay system" evidence="1">
    <location>
        <position position="876"/>
    </location>
</feature>
<feature type="active site" description="Charge relay system" evidence="1">
    <location>
        <position position="971"/>
    </location>
</feature>
<feature type="lipid moiety-binding region" description="N-myristoyl glycine" evidence="2">
    <location>
        <position position="2"/>
    </location>
</feature>
<feature type="glycosylation site" description="N-linked (GlcNAc...) asparagine" evidence="2">
    <location>
        <position position="116"/>
    </location>
</feature>
<feature type="glycosylation site" description="N-linked (GlcNAc...) asparagine" evidence="2">
    <location>
        <position position="147"/>
    </location>
</feature>
<feature type="glycosylation site" description="N-linked (GlcNAc...) asparagine" evidence="2">
    <location>
        <position position="179"/>
    </location>
</feature>
<feature type="glycosylation site" description="N-linked (GlcNAc...) asparagine" evidence="2">
    <location>
        <position position="328"/>
    </location>
</feature>
<feature type="glycosylation site" description="N-linked (GlcNAc...) asparagine" evidence="2">
    <location>
        <position position="335"/>
    </location>
</feature>
<feature type="glycosylation site" description="N-linked (GlcNAc...) asparagine" evidence="2">
    <location>
        <position position="388"/>
    </location>
</feature>
<feature type="glycosylation site" description="N-linked (GlcNAc...) asparagine" evidence="2">
    <location>
        <position position="440"/>
    </location>
</feature>
<feature type="glycosylation site" description="N-linked (GlcNAc...) asparagine" evidence="2">
    <location>
        <position position="470"/>
    </location>
</feature>
<feature type="glycosylation site" description="N-linked (GlcNAc...) asparagine" evidence="2">
    <location>
        <position position="503"/>
    </location>
</feature>
<feature type="glycosylation site" description="N-linked (GlcNAc...) asparagine" evidence="2">
    <location>
        <position position="534"/>
    </location>
</feature>
<feature type="glycosylation site" description="N-linked (GlcNAc...) asparagine" evidence="2">
    <location>
        <position position="630"/>
    </location>
</feature>
<feature type="glycosylation site" description="N-linked (GlcNAc...) asparagine" evidence="2">
    <location>
        <position position="682"/>
    </location>
</feature>
<feature type="glycosylation site" description="N-linked (GlcNAc...) asparagine" evidence="2">
    <location>
        <position position="706"/>
    </location>
</feature>
<feature type="glycosylation site" description="N-linked (GlcNAc...) asparagine" evidence="2">
    <location>
        <position position="725"/>
    </location>
</feature>
<feature type="glycosylation site" description="N-linked (GlcNAc...) asparagine" evidence="2">
    <location>
        <position position="848"/>
    </location>
</feature>
<feature type="glycosylation site" description="N-linked (GlcNAc...) asparagine" evidence="2">
    <location>
        <position position="887"/>
    </location>
</feature>
<feature type="glycosylation site" description="N-linked (GlcNAc...) asparagine" evidence="2">
    <location>
        <position position="909"/>
    </location>
</feature>
<feature type="glycosylation site" description="N-linked (GlcNAc...) asparagine" evidence="2">
    <location>
        <position position="949"/>
    </location>
</feature>
<feature type="disulfide bond" evidence="1">
    <location>
        <begin position="184"/>
        <end position="197"/>
    </location>
</feature>
<feature type="disulfide bond" evidence="1">
    <location>
        <begin position="191"/>
        <end position="210"/>
    </location>
</feature>
<feature type="disulfide bond" evidence="1">
    <location>
        <begin position="204"/>
        <end position="221"/>
    </location>
</feature>
<feature type="disulfide bond" evidence="1">
    <location>
        <begin position="225"/>
        <end position="253"/>
    </location>
</feature>
<feature type="disulfide bond" evidence="1">
    <location>
        <begin position="524"/>
        <end position="552"/>
    </location>
</feature>
<feature type="disulfide bond" evidence="1">
    <location>
        <begin position="643"/>
        <end position="655"/>
    </location>
</feature>
<feature type="disulfide bond" evidence="1">
    <location>
        <begin position="650"/>
        <end position="668"/>
    </location>
</feature>
<feature type="disulfide bond" evidence="1">
    <location>
        <begin position="662"/>
        <end position="677"/>
    </location>
</feature>
<feature type="disulfide bond" evidence="1">
    <location>
        <begin position="757"/>
        <end position="767"/>
    </location>
</feature>
<feature type="disulfide bond" description="Interchain (between heavy and light chains)" evidence="3 4 7 8">
    <location>
        <begin position="772"/>
        <end position="896"/>
    </location>
</feature>
<feature type="disulfide bond" evidence="11">
    <location>
        <begin position="810"/>
        <end position="826"/>
    </location>
</feature>
<feature type="disulfide bond" evidence="11">
    <location>
        <begin position="910"/>
        <end position="977"/>
    </location>
</feature>
<feature type="disulfide bond" evidence="11">
    <location>
        <begin position="941"/>
        <end position="956"/>
    </location>
</feature>
<feature type="disulfide bond" evidence="11">
    <location>
        <begin position="967"/>
        <end position="995"/>
    </location>
</feature>
<feature type="sequence variant" id="VAR_031686" description="In dbSNP:rs35987974.">
    <original>T</original>
    <variation>I</variation>
    <location>
        <position position="65"/>
    </location>
</feature>
<feature type="sequence variant" id="VAR_021940" description="In dbSNP:rs2824804.">
    <original>K</original>
    <variation>R</variation>
    <location>
        <position position="77"/>
    </location>
</feature>
<feature type="sequence variant" id="VAR_031687" description="In dbSNP:rs2824790." evidence="9 10 12">
    <original>E</original>
    <variation>Q</variation>
    <location>
        <position position="134"/>
    </location>
</feature>
<feature type="sequence variant" id="VAR_031688" description="In dbSNP:rs8134187.">
    <original>S</original>
    <variation>C</variation>
    <location>
        <position position="545"/>
    </location>
</feature>
<feature type="sequence variant" id="VAR_020175" description="In dbSNP:rs2273204.">
    <original>E</original>
    <variation>K</variation>
    <location>
        <position position="641"/>
    </location>
</feature>
<feature type="sequence variant" id="VAR_024292" description="In dbSNP:rs11088674.">
    <original>N</original>
    <variation>H</variation>
    <location>
        <position position="660"/>
    </location>
</feature>
<feature type="sequence variant" id="VAR_031689" description="In dbSNP:rs2824721." evidence="9 10 12">
    <original>P</original>
    <variation>S</variation>
    <location>
        <position position="732"/>
    </location>
</feature>
<feature type="sequence variant" id="VAR_031690" description="In dbSNP:rs8130110.">
    <original>Y</original>
    <variation>C</variation>
    <location>
        <position position="828"/>
    </location>
</feature>
<feature type="strand" evidence="15">
    <location>
        <begin position="536"/>
        <end position="539"/>
    </location>
</feature>
<feature type="turn" evidence="15">
    <location>
        <begin position="540"/>
        <end position="543"/>
    </location>
</feature>
<feature type="strand" evidence="15">
    <location>
        <begin position="551"/>
        <end position="553"/>
    </location>
</feature>
<feature type="strand" evidence="15">
    <location>
        <begin position="555"/>
        <end position="557"/>
    </location>
</feature>
<feature type="strand" evidence="15">
    <location>
        <begin position="563"/>
        <end position="572"/>
    </location>
</feature>
<feature type="strand" evidence="15">
    <location>
        <begin position="578"/>
        <end position="583"/>
    </location>
</feature>
<feature type="strand" evidence="15">
    <location>
        <begin position="586"/>
        <end position="589"/>
    </location>
</feature>
<feature type="strand" evidence="15">
    <location>
        <begin position="594"/>
        <end position="596"/>
    </location>
</feature>
<feature type="strand" evidence="15">
    <location>
        <begin position="598"/>
        <end position="600"/>
    </location>
</feature>
<feature type="strand" evidence="15">
    <location>
        <begin position="608"/>
        <end position="617"/>
    </location>
</feature>
<feature type="strand" evidence="15">
    <location>
        <begin position="626"/>
        <end position="636"/>
    </location>
</feature>
<feature type="strand" evidence="15">
    <location>
        <begin position="647"/>
        <end position="649"/>
    </location>
</feature>
<feature type="strand" evidence="15">
    <location>
        <begin position="655"/>
        <end position="657"/>
    </location>
</feature>
<feature type="helix" evidence="15">
    <location>
        <begin position="658"/>
        <end position="660"/>
    </location>
</feature>
<feature type="strand" evidence="15">
    <location>
        <begin position="661"/>
        <end position="665"/>
    </location>
</feature>
<feature type="strand" evidence="15">
    <location>
        <begin position="668"/>
        <end position="670"/>
    </location>
</feature>
<feature type="turn" evidence="15">
    <location>
        <begin position="672"/>
        <end position="674"/>
    </location>
</feature>
<feature type="strand" evidence="15">
    <location>
        <begin position="693"/>
        <end position="695"/>
    </location>
</feature>
<feature type="strand" evidence="15">
    <location>
        <begin position="698"/>
        <end position="700"/>
    </location>
</feature>
<feature type="helix" evidence="15">
    <location>
        <begin position="712"/>
        <end position="718"/>
    </location>
</feature>
<feature type="strand" evidence="15">
    <location>
        <begin position="724"/>
        <end position="727"/>
    </location>
</feature>
<feature type="strand" evidence="15">
    <location>
        <begin position="739"/>
        <end position="742"/>
    </location>
</feature>
<feature type="strand" evidence="15">
    <location>
        <begin position="750"/>
        <end position="752"/>
    </location>
</feature>
<feature type="strand" evidence="15">
    <location>
        <begin position="765"/>
        <end position="767"/>
    </location>
</feature>
<feature type="strand" evidence="15">
    <location>
        <begin position="785"/>
        <end position="787"/>
    </location>
</feature>
<feature type="strand" evidence="14">
    <location>
        <begin position="799"/>
        <end position="804"/>
    </location>
</feature>
<feature type="strand" evidence="14">
    <location>
        <begin position="807"/>
        <end position="814"/>
    </location>
</feature>
<feature type="strand" evidence="14">
    <location>
        <begin position="816"/>
        <end position="822"/>
    </location>
</feature>
<feature type="helix" evidence="14">
    <location>
        <begin position="824"/>
        <end position="827"/>
    </location>
</feature>
<feature type="helix" evidence="14">
    <location>
        <begin position="834"/>
        <end position="836"/>
    </location>
</feature>
<feature type="strand" evidence="14">
    <location>
        <begin position="837"/>
        <end position="842"/>
    </location>
</feature>
<feature type="strand" evidence="14">
    <location>
        <begin position="855"/>
        <end position="864"/>
    </location>
</feature>
<feature type="turn" evidence="14">
    <location>
        <begin position="870"/>
        <end position="873"/>
    </location>
</feature>
<feature type="strand" evidence="14">
    <location>
        <begin position="878"/>
        <end position="884"/>
    </location>
</feature>
<feature type="strand" evidence="14">
    <location>
        <begin position="909"/>
        <end position="919"/>
    </location>
</feature>
<feature type="strand" evidence="14">
    <location>
        <begin position="929"/>
        <end position="936"/>
    </location>
</feature>
<feature type="helix" evidence="14">
    <location>
        <begin position="938"/>
        <end position="944"/>
    </location>
</feature>
<feature type="strand" evidence="15">
    <location>
        <begin position="946"/>
        <end position="948"/>
    </location>
</feature>
<feature type="strand" evidence="14">
    <location>
        <begin position="954"/>
        <end position="957"/>
    </location>
</feature>
<feature type="strand" evidence="15">
    <location>
        <begin position="962"/>
        <end position="964"/>
    </location>
</feature>
<feature type="strand" evidence="14">
    <location>
        <begin position="974"/>
        <end position="979"/>
    </location>
</feature>
<feature type="strand" evidence="14">
    <location>
        <begin position="982"/>
        <end position="991"/>
    </location>
</feature>
<feature type="strand" evidence="14">
    <location>
        <begin position="993"/>
        <end position="996"/>
    </location>
</feature>
<feature type="strand" evidence="14">
    <location>
        <begin position="1002"/>
        <end position="1006"/>
    </location>
</feature>
<feature type="helix" evidence="14">
    <location>
        <begin position="1007"/>
        <end position="1009"/>
    </location>
</feature>
<feature type="helix" evidence="14">
    <location>
        <begin position="1011"/>
        <end position="1015"/>
    </location>
</feature>
<proteinExistence type="evidence at protein level"/>
<reference key="1">
    <citation type="journal article" date="1995" name="Biochemistry">
        <title>cDNA sequence and chromosomal localization of human enterokinase, the proteolytic activator of trypsinogen.</title>
        <authorList>
            <person name="Kitamoto Y."/>
            <person name="Veile R.A."/>
            <person name="Donis-Keller H."/>
            <person name="Sadler J.E."/>
        </authorList>
    </citation>
    <scope>NUCLEOTIDE SEQUENCE [MRNA]</scope>
    <scope>VARIANTS GLN-134 AND SER-732</scope>
    <source>
        <tissue>Duodenum</tissue>
    </source>
</reference>
<reference key="2">
    <citation type="journal article" date="2002" name="Am. J. Hum. Genet.">
        <title>Mutations in the proenteropeptidase gene are the molecular cause of congenital enteropeptidase deficiency.</title>
        <authorList>
            <person name="Holzinger A."/>
            <person name="Maier E.M."/>
            <person name="Buck C."/>
            <person name="Mayerhofer P.U."/>
            <person name="Kappler M."/>
            <person name="Haworth J.C."/>
            <person name="Moroz S.P."/>
            <person name="Hadorn H.-B."/>
            <person name="Sadler J.E."/>
            <person name="Roscher A.A."/>
        </authorList>
    </citation>
    <scope>NUCLEOTIDE SEQUENCE [GENOMIC DNA]</scope>
    <scope>VARIANTS GLN-134 AND SER-732</scope>
    <scope>INVOLVEMENT IN ENTKD</scope>
</reference>
<reference key="3">
    <citation type="journal article" date="2000" name="Nature">
        <title>The DNA sequence of human chromosome 21.</title>
        <authorList>
            <person name="Hattori M."/>
            <person name="Fujiyama A."/>
            <person name="Taylor T.D."/>
            <person name="Watanabe H."/>
            <person name="Yada T."/>
            <person name="Park H.-S."/>
            <person name="Toyoda A."/>
            <person name="Ishii K."/>
            <person name="Totoki Y."/>
            <person name="Choi D.-K."/>
            <person name="Groner Y."/>
            <person name="Soeda E."/>
            <person name="Ohki M."/>
            <person name="Takagi T."/>
            <person name="Sakaki Y."/>
            <person name="Taudien S."/>
            <person name="Blechschmidt K."/>
            <person name="Polley A."/>
            <person name="Menzel U."/>
            <person name="Delabar J."/>
            <person name="Kumpf K."/>
            <person name="Lehmann R."/>
            <person name="Patterson D."/>
            <person name="Reichwald K."/>
            <person name="Rump A."/>
            <person name="Schillhabel M."/>
            <person name="Schudy A."/>
            <person name="Zimmermann W."/>
            <person name="Rosenthal A."/>
            <person name="Kudoh J."/>
            <person name="Shibuya K."/>
            <person name="Kawasaki K."/>
            <person name="Asakawa S."/>
            <person name="Shintani A."/>
            <person name="Sasaki T."/>
            <person name="Nagamine K."/>
            <person name="Mitsuyama S."/>
            <person name="Antonarakis S.E."/>
            <person name="Minoshima S."/>
            <person name="Shimizu N."/>
            <person name="Nordsiek G."/>
            <person name="Hornischer K."/>
            <person name="Brandt P."/>
            <person name="Scharfe M."/>
            <person name="Schoen O."/>
            <person name="Desario A."/>
            <person name="Reichelt J."/>
            <person name="Kauer G."/>
            <person name="Bloecker H."/>
            <person name="Ramser J."/>
            <person name="Beck A."/>
            <person name="Klages S."/>
            <person name="Hennig S."/>
            <person name="Riesselmann L."/>
            <person name="Dagand E."/>
            <person name="Wehrmeyer S."/>
            <person name="Borzym K."/>
            <person name="Gardiner K."/>
            <person name="Nizetic D."/>
            <person name="Francis F."/>
            <person name="Lehrach H."/>
            <person name="Reinhardt R."/>
            <person name="Yaspo M.-L."/>
        </authorList>
    </citation>
    <scope>NUCLEOTIDE SEQUENCE [LARGE SCALE GENOMIC DNA]</scope>
</reference>
<reference key="4">
    <citation type="journal article" date="2004" name="Genome Res.">
        <title>The status, quality, and expansion of the NIH full-length cDNA project: the Mammalian Gene Collection (MGC).</title>
        <authorList>
            <consortium name="The MGC Project Team"/>
        </authorList>
    </citation>
    <scope>NUCLEOTIDE SEQUENCE [LARGE SCALE MRNA]</scope>
    <scope>VARIANTS GLN-134 AND SER-732</scope>
</reference>
<reference key="5">
    <citation type="journal article" date="1994" name="Proc. Natl. Acad. Sci. U.S.A.">
        <title>Enterokinase, the initiator of intestinal digestion, is a mosaic protease composed of a distinctive assortment of domains.</title>
        <authorList>
            <person name="Kitamoto Y."/>
            <person name="Yuan X."/>
            <person name="Wu Q."/>
            <person name="McCourt D.W."/>
            <person name="Sadler J.E."/>
        </authorList>
    </citation>
    <scope>NUCLEOTIDE SEQUENCE [MRNA] OF 749-1019</scope>
    <source>
        <tissue>Duodenum</tissue>
    </source>
</reference>
<reference key="6">
    <citation type="journal article" date="2012" name="Proteins">
        <title>Crystal structure of a supercharged variant of the human enteropeptidase light chain.</title>
        <authorList>
            <person name="Simeonov P."/>
            <person name="Zahn M."/>
            <person name="Strater N."/>
            <person name="Zuchner T."/>
        </authorList>
    </citation>
    <scope>X-RAY CRYSTALLOGRAPHY (1.9 ANGSTROMS) OF 785-1019</scope>
    <scope>DISULFIDE BONDS</scope>
</reference>
<protein>
    <recommendedName>
        <fullName>Enteropeptidase</fullName>
        <ecNumber>3.4.21.9</ecNumber>
    </recommendedName>
    <alternativeName>
        <fullName>Enterokinase</fullName>
    </alternativeName>
    <alternativeName>
        <fullName>Serine protease 7</fullName>
    </alternativeName>
    <alternativeName>
        <fullName>Transmembrane protease serine 15</fullName>
    </alternativeName>
    <component>
        <recommendedName>
            <fullName>Enteropeptidase non-catalytic heavy chain</fullName>
        </recommendedName>
    </component>
    <component>
        <recommendedName>
            <fullName>Enteropeptidase catalytic light chain</fullName>
        </recommendedName>
    </component>
</protein>
<name>ENTK_HUMAN</name>